<evidence type="ECO:0000255" key="1">
    <source>
        <dbReference type="HAMAP-Rule" id="MF_00412"/>
    </source>
</evidence>
<comment type="function">
    <text evidence="1">Catalyzes the NADPH-dependent reduction of L-glutamate 5-phosphate into L-glutamate 5-semialdehyde and phosphate. The product spontaneously undergoes cyclization to form 1-pyrroline-5-carboxylate.</text>
</comment>
<comment type="catalytic activity">
    <reaction evidence="1">
        <text>L-glutamate 5-semialdehyde + phosphate + NADP(+) = L-glutamyl 5-phosphate + NADPH + H(+)</text>
        <dbReference type="Rhea" id="RHEA:19541"/>
        <dbReference type="ChEBI" id="CHEBI:15378"/>
        <dbReference type="ChEBI" id="CHEBI:43474"/>
        <dbReference type="ChEBI" id="CHEBI:57783"/>
        <dbReference type="ChEBI" id="CHEBI:58066"/>
        <dbReference type="ChEBI" id="CHEBI:58274"/>
        <dbReference type="ChEBI" id="CHEBI:58349"/>
        <dbReference type="EC" id="1.2.1.41"/>
    </reaction>
</comment>
<comment type="pathway">
    <text evidence="1">Amino-acid biosynthesis; L-proline biosynthesis; L-glutamate 5-semialdehyde from L-glutamate: step 2/2.</text>
</comment>
<comment type="subcellular location">
    <subcellularLocation>
        <location evidence="1">Cytoplasm</location>
    </subcellularLocation>
</comment>
<comment type="similarity">
    <text evidence="1">Belongs to the gamma-glutamyl phosphate reductase family.</text>
</comment>
<gene>
    <name evidence="1" type="primary">proA</name>
    <name type="ordered locus">IL1986</name>
</gene>
<name>PROA_IDILO</name>
<keyword id="KW-0028">Amino-acid biosynthesis</keyword>
<keyword id="KW-0963">Cytoplasm</keyword>
<keyword id="KW-0521">NADP</keyword>
<keyword id="KW-0560">Oxidoreductase</keyword>
<keyword id="KW-0641">Proline biosynthesis</keyword>
<keyword id="KW-1185">Reference proteome</keyword>
<protein>
    <recommendedName>
        <fullName evidence="1">Gamma-glutamyl phosphate reductase</fullName>
        <shortName evidence="1">GPR</shortName>
        <ecNumber evidence="1">1.2.1.41</ecNumber>
    </recommendedName>
    <alternativeName>
        <fullName evidence="1">Glutamate-5-semialdehyde dehydrogenase</fullName>
    </alternativeName>
    <alternativeName>
        <fullName evidence="1">Glutamyl-gamma-semialdehyde dehydrogenase</fullName>
        <shortName evidence="1">GSA dehydrogenase</shortName>
    </alternativeName>
</protein>
<sequence length="417" mass="45294">MSQQLAKEISQRAAKAARAVATLSETDKNAVLQKMADAIRARQDKIIEVNKKDLATGKEKGLSDAMMDRLELTPERVEGMASAIEEIIALKDPVGDSYVLDERPNGMKIEKMRIPLGVICMIYEARPNVTADAGALCFKSGNAVILRCGREAIESSKAIAEALHEALEASNLPKDVITVVPTPDRELMTELLQQKDYIDLVIPRGGEGLIHFVSDTSKIPVIQHYKGVCHLYVDKDADLDKALAILLNGKTQRTGVCNALEGLLVHQDVADKFLPMAAKALAEKDVTIHADKRSVSYFDGADEIADDAFGEEYLALEIAVRTVDNYEGAIEHIQEFGSGHTEVIITENDETAKRFIREVDSAVTMANVSSRFSDGGQLGLGAEIGISTSKLHAYGPMGLEALTTEKFVVTGNGQVRD</sequence>
<feature type="chain" id="PRO_0000189735" description="Gamma-glutamyl phosphate reductase">
    <location>
        <begin position="1"/>
        <end position="417"/>
    </location>
</feature>
<reference key="1">
    <citation type="journal article" date="2004" name="Proc. Natl. Acad. Sci. U.S.A.">
        <title>Genome sequence of the deep-sea gamma-proteobacterium Idiomarina loihiensis reveals amino acid fermentation as a source of carbon and energy.</title>
        <authorList>
            <person name="Hou S."/>
            <person name="Saw J.H."/>
            <person name="Lee K.S."/>
            <person name="Freitas T.A."/>
            <person name="Belisle C."/>
            <person name="Kawarabayasi Y."/>
            <person name="Donachie S.P."/>
            <person name="Pikina A."/>
            <person name="Galperin M.Y."/>
            <person name="Koonin E.V."/>
            <person name="Makarova K.S."/>
            <person name="Omelchenko M.V."/>
            <person name="Sorokin A."/>
            <person name="Wolf Y.I."/>
            <person name="Li Q.X."/>
            <person name="Keum Y.S."/>
            <person name="Campbell S."/>
            <person name="Denery J."/>
            <person name="Aizawa S."/>
            <person name="Shibata S."/>
            <person name="Malahoff A."/>
            <person name="Alam M."/>
        </authorList>
    </citation>
    <scope>NUCLEOTIDE SEQUENCE [LARGE SCALE GENOMIC DNA]</scope>
    <source>
        <strain>ATCC BAA-735 / DSM 15497 / L2-TR</strain>
    </source>
</reference>
<proteinExistence type="inferred from homology"/>
<dbReference type="EC" id="1.2.1.41" evidence="1"/>
<dbReference type="EMBL" id="AE017340">
    <property type="protein sequence ID" value="AAV82818.1"/>
    <property type="molecule type" value="Genomic_DNA"/>
</dbReference>
<dbReference type="RefSeq" id="WP_011235214.1">
    <property type="nucleotide sequence ID" value="NC_006512.1"/>
</dbReference>
<dbReference type="SMR" id="Q5QY68"/>
<dbReference type="STRING" id="283942.IL1986"/>
<dbReference type="GeneID" id="41337176"/>
<dbReference type="KEGG" id="ilo:IL1986"/>
<dbReference type="eggNOG" id="COG0014">
    <property type="taxonomic scope" value="Bacteria"/>
</dbReference>
<dbReference type="HOGENOM" id="CLU_030231_0_0_6"/>
<dbReference type="OrthoDB" id="9809970at2"/>
<dbReference type="UniPathway" id="UPA00098">
    <property type="reaction ID" value="UER00360"/>
</dbReference>
<dbReference type="Proteomes" id="UP000001171">
    <property type="component" value="Chromosome"/>
</dbReference>
<dbReference type="GO" id="GO:0005737">
    <property type="term" value="C:cytoplasm"/>
    <property type="evidence" value="ECO:0007669"/>
    <property type="project" value="UniProtKB-SubCell"/>
</dbReference>
<dbReference type="GO" id="GO:0004350">
    <property type="term" value="F:glutamate-5-semialdehyde dehydrogenase activity"/>
    <property type="evidence" value="ECO:0007669"/>
    <property type="project" value="UniProtKB-UniRule"/>
</dbReference>
<dbReference type="GO" id="GO:0050661">
    <property type="term" value="F:NADP binding"/>
    <property type="evidence" value="ECO:0007669"/>
    <property type="project" value="InterPro"/>
</dbReference>
<dbReference type="GO" id="GO:0055129">
    <property type="term" value="P:L-proline biosynthetic process"/>
    <property type="evidence" value="ECO:0007669"/>
    <property type="project" value="UniProtKB-UniRule"/>
</dbReference>
<dbReference type="CDD" id="cd07079">
    <property type="entry name" value="ALDH_F18-19_ProA-GPR"/>
    <property type="match status" value="1"/>
</dbReference>
<dbReference type="FunFam" id="3.40.309.10:FF:000006">
    <property type="entry name" value="Gamma-glutamyl phosphate reductase"/>
    <property type="match status" value="1"/>
</dbReference>
<dbReference type="Gene3D" id="3.40.605.10">
    <property type="entry name" value="Aldehyde Dehydrogenase, Chain A, domain 1"/>
    <property type="match status" value="1"/>
</dbReference>
<dbReference type="Gene3D" id="3.40.309.10">
    <property type="entry name" value="Aldehyde Dehydrogenase, Chain A, domain 2"/>
    <property type="match status" value="1"/>
</dbReference>
<dbReference type="HAMAP" id="MF_00412">
    <property type="entry name" value="ProA"/>
    <property type="match status" value="1"/>
</dbReference>
<dbReference type="InterPro" id="IPR016161">
    <property type="entry name" value="Ald_DH/histidinol_DH"/>
</dbReference>
<dbReference type="InterPro" id="IPR016163">
    <property type="entry name" value="Ald_DH_C"/>
</dbReference>
<dbReference type="InterPro" id="IPR016162">
    <property type="entry name" value="Ald_DH_N"/>
</dbReference>
<dbReference type="InterPro" id="IPR015590">
    <property type="entry name" value="Aldehyde_DH_dom"/>
</dbReference>
<dbReference type="InterPro" id="IPR020593">
    <property type="entry name" value="G-glutamylP_reductase_CS"/>
</dbReference>
<dbReference type="InterPro" id="IPR012134">
    <property type="entry name" value="Glu-5-SA_DH"/>
</dbReference>
<dbReference type="InterPro" id="IPR000965">
    <property type="entry name" value="GPR_dom"/>
</dbReference>
<dbReference type="NCBIfam" id="NF001221">
    <property type="entry name" value="PRK00197.1"/>
    <property type="match status" value="1"/>
</dbReference>
<dbReference type="NCBIfam" id="TIGR00407">
    <property type="entry name" value="proA"/>
    <property type="match status" value="1"/>
</dbReference>
<dbReference type="PANTHER" id="PTHR11063:SF8">
    <property type="entry name" value="DELTA-1-PYRROLINE-5-CARBOXYLATE SYNTHASE"/>
    <property type="match status" value="1"/>
</dbReference>
<dbReference type="PANTHER" id="PTHR11063">
    <property type="entry name" value="GLUTAMATE SEMIALDEHYDE DEHYDROGENASE"/>
    <property type="match status" value="1"/>
</dbReference>
<dbReference type="Pfam" id="PF00171">
    <property type="entry name" value="Aldedh"/>
    <property type="match status" value="1"/>
</dbReference>
<dbReference type="PIRSF" id="PIRSF000151">
    <property type="entry name" value="GPR"/>
    <property type="match status" value="1"/>
</dbReference>
<dbReference type="SUPFAM" id="SSF53720">
    <property type="entry name" value="ALDH-like"/>
    <property type="match status" value="1"/>
</dbReference>
<dbReference type="PROSITE" id="PS01223">
    <property type="entry name" value="PROA"/>
    <property type="match status" value="1"/>
</dbReference>
<organism>
    <name type="scientific">Idiomarina loihiensis (strain ATCC BAA-735 / DSM 15497 / L2-TR)</name>
    <dbReference type="NCBI Taxonomy" id="283942"/>
    <lineage>
        <taxon>Bacteria</taxon>
        <taxon>Pseudomonadati</taxon>
        <taxon>Pseudomonadota</taxon>
        <taxon>Gammaproteobacteria</taxon>
        <taxon>Alteromonadales</taxon>
        <taxon>Idiomarinaceae</taxon>
        <taxon>Idiomarina</taxon>
    </lineage>
</organism>
<accession>Q5QY68</accession>